<feature type="chain" id="PRO_0000327393" description="General transcriptional corepressor tupA">
    <location>
        <begin position="1"/>
        <end position="579"/>
    </location>
</feature>
<feature type="repeat" description="WD 1">
    <location>
        <begin position="279"/>
        <end position="319"/>
    </location>
</feature>
<feature type="repeat" description="WD 2">
    <location>
        <begin position="325"/>
        <end position="364"/>
    </location>
</feature>
<feature type="repeat" description="WD 3">
    <location>
        <begin position="367"/>
        <end position="406"/>
    </location>
</feature>
<feature type="repeat" description="WD 4">
    <location>
        <begin position="413"/>
        <end position="452"/>
    </location>
</feature>
<feature type="repeat" description="WD 5">
    <location>
        <begin position="455"/>
        <end position="494"/>
    </location>
</feature>
<feature type="repeat" description="WD 6">
    <location>
        <begin position="501"/>
        <end position="540"/>
    </location>
</feature>
<feature type="repeat" description="WD 7">
    <location>
        <begin position="543"/>
        <end position="579"/>
    </location>
</feature>
<feature type="region of interest" description="Disordered" evidence="2">
    <location>
        <begin position="83"/>
        <end position="258"/>
    </location>
</feature>
<feature type="compositionally biased region" description="Polar residues" evidence="2">
    <location>
        <begin position="83"/>
        <end position="101"/>
    </location>
</feature>
<feature type="compositionally biased region" description="Low complexity" evidence="2">
    <location>
        <begin position="109"/>
        <end position="128"/>
    </location>
</feature>
<feature type="compositionally biased region" description="Low complexity" evidence="2">
    <location>
        <begin position="157"/>
        <end position="198"/>
    </location>
</feature>
<feature type="compositionally biased region" description="Low complexity" evidence="2">
    <location>
        <begin position="207"/>
        <end position="224"/>
    </location>
</feature>
<feature type="compositionally biased region" description="Basic and acidic residues" evidence="2">
    <location>
        <begin position="227"/>
        <end position="256"/>
    </location>
</feature>
<keyword id="KW-0539">Nucleus</keyword>
<keyword id="KW-1185">Reference proteome</keyword>
<keyword id="KW-0677">Repeat</keyword>
<keyword id="KW-0678">Repressor</keyword>
<keyword id="KW-0804">Transcription</keyword>
<keyword id="KW-0805">Transcription regulation</keyword>
<keyword id="KW-0853">WD repeat</keyword>
<sequence>MYGRTARASELLDNLKGEIDALNHELSLYKHQKDDYERKFQNQLAELNTIQQTLYDLERGQNKMKIHYEEEIRQLKRQLEQQNINASQRDLNSPSTFRSNSPAPPAQHNNNNNNIINNNNNNNNNNNNMQRNTPTPTIPDKGQPKQRQRSGSGEFYQQPGLGPQQLNFQQLNLQQQQQQLQQQQQQGSGQSFPSLSPLDSNRHPKEMGNNMSGNSMSMNNNNNNLNKKPDMEEVKEEDRRRHDTEMSEENGKEKGTDWLVGYNPSVQTNLNIDLLHNLQHNSVVCCVNFSNDGKYLATGCNRSAQIYDVDTGKKVHAFVDESEKDGDLYIRSVCFSPDGNYLATGAEDKTVKVWDIHTKKIQHTFYGHELDIYSLDYSSDGRFIVSGSGDKKAKIWDIEKGKCAFTLGNEEVGPKNGVTSVAMSPDGRLVAAGSLDNIVRLWDAQTGYFLERYEGHLDSVYSVAFSPDGKSLASGSLDKSLKLWDLSGSRSRSRCRATFNGHKDFVLSVAFSPDGSWLISGSKDRSVQFWDPRNGTTHMMLQGHKNSVISVALSPKNNSHGVFATGSGDFRSRLWKYDS</sequence>
<accession>O76734</accession>
<accession>Q54SS6</accession>
<reference key="1">
    <citation type="submission" date="1998-07" db="EMBL/GenBank/DDBJ databases">
        <authorList>
            <person name="Pfeifer M."/>
            <person name="Faix J."/>
            <person name="Gerisch G."/>
        </authorList>
    </citation>
    <scope>NUCLEOTIDE SEQUENCE [MRNA]</scope>
    <source>
        <strain>AX3</strain>
    </source>
</reference>
<reference key="2">
    <citation type="journal article" date="2005" name="Nature">
        <title>The genome of the social amoeba Dictyostelium discoideum.</title>
        <authorList>
            <person name="Eichinger L."/>
            <person name="Pachebat J.A."/>
            <person name="Gloeckner G."/>
            <person name="Rajandream M.A."/>
            <person name="Sucgang R."/>
            <person name="Berriman M."/>
            <person name="Song J."/>
            <person name="Olsen R."/>
            <person name="Szafranski K."/>
            <person name="Xu Q."/>
            <person name="Tunggal B."/>
            <person name="Kummerfeld S."/>
            <person name="Madera M."/>
            <person name="Konfortov B.A."/>
            <person name="Rivero F."/>
            <person name="Bankier A.T."/>
            <person name="Lehmann R."/>
            <person name="Hamlin N."/>
            <person name="Davies R."/>
            <person name="Gaudet P."/>
            <person name="Fey P."/>
            <person name="Pilcher K."/>
            <person name="Chen G."/>
            <person name="Saunders D."/>
            <person name="Sodergren E.J."/>
            <person name="Davis P."/>
            <person name="Kerhornou A."/>
            <person name="Nie X."/>
            <person name="Hall N."/>
            <person name="Anjard C."/>
            <person name="Hemphill L."/>
            <person name="Bason N."/>
            <person name="Farbrother P."/>
            <person name="Desany B."/>
            <person name="Just E."/>
            <person name="Morio T."/>
            <person name="Rost R."/>
            <person name="Churcher C.M."/>
            <person name="Cooper J."/>
            <person name="Haydock S."/>
            <person name="van Driessche N."/>
            <person name="Cronin A."/>
            <person name="Goodhead I."/>
            <person name="Muzny D.M."/>
            <person name="Mourier T."/>
            <person name="Pain A."/>
            <person name="Lu M."/>
            <person name="Harper D."/>
            <person name="Lindsay R."/>
            <person name="Hauser H."/>
            <person name="James K.D."/>
            <person name="Quiles M."/>
            <person name="Madan Babu M."/>
            <person name="Saito T."/>
            <person name="Buchrieser C."/>
            <person name="Wardroper A."/>
            <person name="Felder M."/>
            <person name="Thangavelu M."/>
            <person name="Johnson D."/>
            <person name="Knights A."/>
            <person name="Loulseged H."/>
            <person name="Mungall K.L."/>
            <person name="Oliver K."/>
            <person name="Price C."/>
            <person name="Quail M.A."/>
            <person name="Urushihara H."/>
            <person name="Hernandez J."/>
            <person name="Rabbinowitsch E."/>
            <person name="Steffen D."/>
            <person name="Sanders M."/>
            <person name="Ma J."/>
            <person name="Kohara Y."/>
            <person name="Sharp S."/>
            <person name="Simmonds M.N."/>
            <person name="Spiegler S."/>
            <person name="Tivey A."/>
            <person name="Sugano S."/>
            <person name="White B."/>
            <person name="Walker D."/>
            <person name="Woodward J.R."/>
            <person name="Winckler T."/>
            <person name="Tanaka Y."/>
            <person name="Shaulsky G."/>
            <person name="Schleicher M."/>
            <person name="Weinstock G.M."/>
            <person name="Rosenthal A."/>
            <person name="Cox E.C."/>
            <person name="Chisholm R.L."/>
            <person name="Gibbs R.A."/>
            <person name="Loomis W.F."/>
            <person name="Platzer M."/>
            <person name="Kay R.R."/>
            <person name="Williams J.G."/>
            <person name="Dear P.H."/>
            <person name="Noegel A.A."/>
            <person name="Barrell B.G."/>
            <person name="Kuspa A."/>
        </authorList>
    </citation>
    <scope>NUCLEOTIDE SEQUENCE [LARGE SCALE GENOMIC DNA]</scope>
    <source>
        <strain>AX4</strain>
    </source>
</reference>
<proteinExistence type="evidence at transcript level"/>
<organism>
    <name type="scientific">Dictyostelium discoideum</name>
    <name type="common">Social amoeba</name>
    <dbReference type="NCBI Taxonomy" id="44689"/>
    <lineage>
        <taxon>Eukaryota</taxon>
        <taxon>Amoebozoa</taxon>
        <taxon>Evosea</taxon>
        <taxon>Eumycetozoa</taxon>
        <taxon>Dictyostelia</taxon>
        <taxon>Dictyosteliales</taxon>
        <taxon>Dictyosteliaceae</taxon>
        <taxon>Dictyostelium</taxon>
    </lineage>
</organism>
<dbReference type="EMBL" id="AF079369">
    <property type="protein sequence ID" value="AAC29438.1"/>
    <property type="molecule type" value="mRNA"/>
</dbReference>
<dbReference type="EMBL" id="AAFI02000046">
    <property type="protein sequence ID" value="EAL66300.1"/>
    <property type="molecule type" value="Genomic_DNA"/>
</dbReference>
<dbReference type="RefSeq" id="XP_640309.1">
    <property type="nucleotide sequence ID" value="XM_635217.1"/>
</dbReference>
<dbReference type="SMR" id="O76734"/>
<dbReference type="FunCoup" id="O76734">
    <property type="interactions" value="1"/>
</dbReference>
<dbReference type="STRING" id="44689.O76734"/>
<dbReference type="PaxDb" id="44689-DDB0214909"/>
<dbReference type="EnsemblProtists" id="EAL66300">
    <property type="protein sequence ID" value="EAL66300"/>
    <property type="gene ID" value="DDB_G0282189"/>
</dbReference>
<dbReference type="GeneID" id="8623485"/>
<dbReference type="KEGG" id="ddi:DDB_G0282189"/>
<dbReference type="dictyBase" id="DDB_G0282189">
    <property type="gene designation" value="tupA"/>
</dbReference>
<dbReference type="VEuPathDB" id="AmoebaDB:DDB_G0282189"/>
<dbReference type="eggNOG" id="KOG0266">
    <property type="taxonomic scope" value="Eukaryota"/>
</dbReference>
<dbReference type="HOGENOM" id="CLU_000288_57_23_1"/>
<dbReference type="InParanoid" id="O76734"/>
<dbReference type="OMA" id="GTTHMML"/>
<dbReference type="PhylomeDB" id="O76734"/>
<dbReference type="PRO" id="PR:O76734"/>
<dbReference type="Proteomes" id="UP000002195">
    <property type="component" value="Chromosome 3"/>
</dbReference>
<dbReference type="GO" id="GO:0005634">
    <property type="term" value="C:nucleus"/>
    <property type="evidence" value="ECO:0007669"/>
    <property type="project" value="UniProtKB-SubCell"/>
</dbReference>
<dbReference type="CDD" id="cd00200">
    <property type="entry name" value="WD40"/>
    <property type="match status" value="1"/>
</dbReference>
<dbReference type="FunFam" id="2.130.10.10:FF:000503">
    <property type="entry name" value="Glucose repression regulatory protein TUP1"/>
    <property type="match status" value="1"/>
</dbReference>
<dbReference type="Gene3D" id="1.20.5.340">
    <property type="match status" value="1"/>
</dbReference>
<dbReference type="Gene3D" id="2.130.10.10">
    <property type="entry name" value="YVTN repeat-like/Quinoprotein amine dehydrogenase"/>
    <property type="match status" value="1"/>
</dbReference>
<dbReference type="InterPro" id="IPR020472">
    <property type="entry name" value="G-protein_beta_WD-40_rep"/>
</dbReference>
<dbReference type="InterPro" id="IPR013890">
    <property type="entry name" value="Tscrpt_rep_Tup1_N"/>
</dbReference>
<dbReference type="InterPro" id="IPR015943">
    <property type="entry name" value="WD40/YVTN_repeat-like_dom_sf"/>
</dbReference>
<dbReference type="InterPro" id="IPR019775">
    <property type="entry name" value="WD40_repeat_CS"/>
</dbReference>
<dbReference type="InterPro" id="IPR036322">
    <property type="entry name" value="WD40_repeat_dom_sf"/>
</dbReference>
<dbReference type="InterPro" id="IPR001680">
    <property type="entry name" value="WD40_rpt"/>
</dbReference>
<dbReference type="PANTHER" id="PTHR19848:SF8">
    <property type="entry name" value="F-BOX AND WD REPEAT DOMAIN CONTAINING 7"/>
    <property type="match status" value="1"/>
</dbReference>
<dbReference type="PANTHER" id="PTHR19848">
    <property type="entry name" value="WD40 REPEAT PROTEIN"/>
    <property type="match status" value="1"/>
</dbReference>
<dbReference type="Pfam" id="PF08581">
    <property type="entry name" value="Tup_N"/>
    <property type="match status" value="1"/>
</dbReference>
<dbReference type="Pfam" id="PF00400">
    <property type="entry name" value="WD40"/>
    <property type="match status" value="7"/>
</dbReference>
<dbReference type="PRINTS" id="PR00320">
    <property type="entry name" value="GPROTEINBRPT"/>
</dbReference>
<dbReference type="SMART" id="SM00320">
    <property type="entry name" value="WD40"/>
    <property type="match status" value="7"/>
</dbReference>
<dbReference type="SUPFAM" id="SSF50978">
    <property type="entry name" value="WD40 repeat-like"/>
    <property type="match status" value="1"/>
</dbReference>
<dbReference type="PROSITE" id="PS00678">
    <property type="entry name" value="WD_REPEATS_1"/>
    <property type="match status" value="4"/>
</dbReference>
<dbReference type="PROSITE" id="PS50082">
    <property type="entry name" value="WD_REPEATS_2"/>
    <property type="match status" value="6"/>
</dbReference>
<dbReference type="PROSITE" id="PS50294">
    <property type="entry name" value="WD_REPEATS_REGION"/>
    <property type="match status" value="1"/>
</dbReference>
<name>TUP1_DICDI</name>
<protein>
    <recommendedName>
        <fullName>General transcriptional corepressor tupA</fullName>
    </recommendedName>
</protein>
<gene>
    <name type="primary">tupA</name>
    <name type="synonym">tup1</name>
    <name type="ORF">DDB_G0282189</name>
</gene>
<comment type="function">
    <text evidence="1">Acts as a component of the trfA-tupA corepressor complex which is involved in the repression of many genes in a wide variety of physiological processes. May also be involved in the derepression of at least some target genes. The complex is recruited to target genes by interaction with DNA-bound transcriptional repressors. The complex recruits histone deacetylases to produce a repressive chromatin structure, interacts with hypoacetylated N-terminal tails of histones H3 and H4 that have been programmed for repression by the action of histone deacetylases and interferes directly with the transcriptional machinery by associating with the RNA polymerase II mediator complex (By similarity).</text>
</comment>
<comment type="subunit">
    <text evidence="1">Associates with trfA to form the trfA-tupA corepressor complex.</text>
</comment>
<comment type="subcellular location">
    <subcellularLocation>
        <location evidence="1">Nucleus</location>
    </subcellularLocation>
</comment>
<comment type="similarity">
    <text evidence="3">Belongs to the WD repeat TUP1 family.</text>
</comment>
<evidence type="ECO:0000250" key="1"/>
<evidence type="ECO:0000256" key="2">
    <source>
        <dbReference type="SAM" id="MobiDB-lite"/>
    </source>
</evidence>
<evidence type="ECO:0000305" key="3"/>